<gene>
    <name evidence="1" type="primary">slmA</name>
    <name type="ordered locus">Sama_0324</name>
</gene>
<feature type="chain" id="PRO_1000070524" description="Nucleoid occlusion factor SlmA">
    <location>
        <begin position="1"/>
        <end position="197"/>
    </location>
</feature>
<feature type="domain" description="HTH tetR-type" evidence="1">
    <location>
        <begin position="7"/>
        <end position="67"/>
    </location>
</feature>
<feature type="DNA-binding region" description="H-T-H motif" evidence="1">
    <location>
        <begin position="30"/>
        <end position="49"/>
    </location>
</feature>
<protein>
    <recommendedName>
        <fullName evidence="1">Nucleoid occlusion factor SlmA</fullName>
    </recommendedName>
</protein>
<organism>
    <name type="scientific">Shewanella amazonensis (strain ATCC BAA-1098 / SB2B)</name>
    <dbReference type="NCBI Taxonomy" id="326297"/>
    <lineage>
        <taxon>Bacteria</taxon>
        <taxon>Pseudomonadati</taxon>
        <taxon>Pseudomonadota</taxon>
        <taxon>Gammaproteobacteria</taxon>
        <taxon>Alteromonadales</taxon>
        <taxon>Shewanellaceae</taxon>
        <taxon>Shewanella</taxon>
    </lineage>
</organism>
<sequence length="197" mass="22584">MAAKEKISRREHILQCLAQMLETNPGQRITTAKLAAEVGVSEAALYRHFPSKARMFEGLIEFIEDSLLSRINLIMDDEKDTMRRCQLVLQLLLLFAERNPGISRVLNGDALLGENERLRSRVSALFGKIETQLKQILREKTLREGKGFELDEAMLANLLLAVAEGRIAQYIRSEFKQKPTEHFDEQWGFIQKQLLQS</sequence>
<dbReference type="EMBL" id="CP000507">
    <property type="protein sequence ID" value="ABL98535.1"/>
    <property type="molecule type" value="Genomic_DNA"/>
</dbReference>
<dbReference type="RefSeq" id="WP_011758445.1">
    <property type="nucleotide sequence ID" value="NC_008700.1"/>
</dbReference>
<dbReference type="SMR" id="A1S2C9"/>
<dbReference type="STRING" id="326297.Sama_0324"/>
<dbReference type="KEGG" id="saz:Sama_0324"/>
<dbReference type="eggNOG" id="COG1309">
    <property type="taxonomic scope" value="Bacteria"/>
</dbReference>
<dbReference type="HOGENOM" id="CLU_069356_5_0_6"/>
<dbReference type="OrthoDB" id="9179041at2"/>
<dbReference type="Proteomes" id="UP000009175">
    <property type="component" value="Chromosome"/>
</dbReference>
<dbReference type="GO" id="GO:0043590">
    <property type="term" value="C:bacterial nucleoid"/>
    <property type="evidence" value="ECO:0007669"/>
    <property type="project" value="UniProtKB-UniRule"/>
</dbReference>
<dbReference type="GO" id="GO:0005737">
    <property type="term" value="C:cytoplasm"/>
    <property type="evidence" value="ECO:0007669"/>
    <property type="project" value="UniProtKB-UniRule"/>
</dbReference>
<dbReference type="GO" id="GO:0043565">
    <property type="term" value="F:sequence-specific DNA binding"/>
    <property type="evidence" value="ECO:0007669"/>
    <property type="project" value="UniProtKB-UniRule"/>
</dbReference>
<dbReference type="GO" id="GO:0051301">
    <property type="term" value="P:cell division"/>
    <property type="evidence" value="ECO:0007669"/>
    <property type="project" value="UniProtKB-KW"/>
</dbReference>
<dbReference type="GO" id="GO:0010974">
    <property type="term" value="P:negative regulation of division septum assembly"/>
    <property type="evidence" value="ECO:0007669"/>
    <property type="project" value="InterPro"/>
</dbReference>
<dbReference type="Gene3D" id="1.10.357.10">
    <property type="entry name" value="Tetracycline Repressor, domain 2"/>
    <property type="match status" value="1"/>
</dbReference>
<dbReference type="HAMAP" id="MF_01839">
    <property type="entry name" value="NO_factor_SlmA"/>
    <property type="match status" value="1"/>
</dbReference>
<dbReference type="InterPro" id="IPR009057">
    <property type="entry name" value="Homeodomain-like_sf"/>
</dbReference>
<dbReference type="InterPro" id="IPR050624">
    <property type="entry name" value="HTH-type_Tx_Regulator"/>
</dbReference>
<dbReference type="InterPro" id="IPR001647">
    <property type="entry name" value="HTH_TetR"/>
</dbReference>
<dbReference type="InterPro" id="IPR023769">
    <property type="entry name" value="NO_SlmA"/>
</dbReference>
<dbReference type="InterPro" id="IPR054580">
    <property type="entry name" value="SlmA-like_C"/>
</dbReference>
<dbReference type="NCBIfam" id="NF007015">
    <property type="entry name" value="PRK09480.1"/>
    <property type="match status" value="1"/>
</dbReference>
<dbReference type="PANTHER" id="PTHR43479">
    <property type="entry name" value="ACREF/ENVCD OPERON REPRESSOR-RELATED"/>
    <property type="match status" value="1"/>
</dbReference>
<dbReference type="PANTHER" id="PTHR43479:SF11">
    <property type="entry name" value="ACREF_ENVCD OPERON REPRESSOR-RELATED"/>
    <property type="match status" value="1"/>
</dbReference>
<dbReference type="Pfam" id="PF22276">
    <property type="entry name" value="SlmA-like_C"/>
    <property type="match status" value="1"/>
</dbReference>
<dbReference type="Pfam" id="PF00440">
    <property type="entry name" value="TetR_N"/>
    <property type="match status" value="1"/>
</dbReference>
<dbReference type="SUPFAM" id="SSF46689">
    <property type="entry name" value="Homeodomain-like"/>
    <property type="match status" value="1"/>
</dbReference>
<dbReference type="PROSITE" id="PS50977">
    <property type="entry name" value="HTH_TETR_2"/>
    <property type="match status" value="1"/>
</dbReference>
<evidence type="ECO:0000255" key="1">
    <source>
        <dbReference type="HAMAP-Rule" id="MF_01839"/>
    </source>
</evidence>
<name>SLMA_SHEAM</name>
<accession>A1S2C9</accession>
<comment type="function">
    <text evidence="1">Required for nucleoid occlusion (NO) phenomenon, which prevents Z-ring formation and cell division over the nucleoid. Acts as a DNA-associated cell division inhibitor that binds simultaneously chromosomal DNA and FtsZ, and disrupts the assembly of FtsZ polymers. SlmA-DNA-binding sequences (SBS) are dispersed on non-Ter regions of the chromosome, preventing FtsZ polymerization at these regions.</text>
</comment>
<comment type="subunit">
    <text evidence="1">Homodimer. Interacts with FtsZ.</text>
</comment>
<comment type="subcellular location">
    <subcellularLocation>
        <location evidence="1">Cytoplasm</location>
        <location evidence="1">Nucleoid</location>
    </subcellularLocation>
</comment>
<comment type="similarity">
    <text evidence="1">Belongs to the nucleoid occlusion factor SlmA family.</text>
</comment>
<reference key="1">
    <citation type="submission" date="2006-12" db="EMBL/GenBank/DDBJ databases">
        <title>Complete sequence of Shewanella amazonensis SB2B.</title>
        <authorList>
            <consortium name="US DOE Joint Genome Institute"/>
            <person name="Copeland A."/>
            <person name="Lucas S."/>
            <person name="Lapidus A."/>
            <person name="Barry K."/>
            <person name="Detter J.C."/>
            <person name="Glavina del Rio T."/>
            <person name="Hammon N."/>
            <person name="Israni S."/>
            <person name="Dalin E."/>
            <person name="Tice H."/>
            <person name="Pitluck S."/>
            <person name="Munk A.C."/>
            <person name="Brettin T."/>
            <person name="Bruce D."/>
            <person name="Han C."/>
            <person name="Tapia R."/>
            <person name="Gilna P."/>
            <person name="Schmutz J."/>
            <person name="Larimer F."/>
            <person name="Land M."/>
            <person name="Hauser L."/>
            <person name="Kyrpides N."/>
            <person name="Mikhailova N."/>
            <person name="Fredrickson J."/>
            <person name="Richardson P."/>
        </authorList>
    </citation>
    <scope>NUCLEOTIDE SEQUENCE [LARGE SCALE GENOMIC DNA]</scope>
    <source>
        <strain>ATCC BAA-1098 / SB2B</strain>
    </source>
</reference>
<proteinExistence type="inferred from homology"/>
<keyword id="KW-0131">Cell cycle</keyword>
<keyword id="KW-0132">Cell division</keyword>
<keyword id="KW-0963">Cytoplasm</keyword>
<keyword id="KW-0238">DNA-binding</keyword>
<keyword id="KW-1185">Reference proteome</keyword>